<gene>
    <name type="primary">dlc</name>
</gene>
<evidence type="ECO:0000250" key="1"/>
<evidence type="ECO:0000255" key="2"/>
<evidence type="ECO:0000255" key="3">
    <source>
        <dbReference type="PROSITE-ProRule" id="PRU00076"/>
    </source>
</evidence>
<evidence type="ECO:0000255" key="4">
    <source>
        <dbReference type="PROSITE-ProRule" id="PRU00377"/>
    </source>
</evidence>
<evidence type="ECO:0000269" key="5">
    <source>
    </source>
</evidence>
<evidence type="ECO:0000269" key="6">
    <source>
    </source>
</evidence>
<proteinExistence type="evidence at transcript level"/>
<reference key="1">
    <citation type="journal article" date="2000" name="Mech. Dev.">
        <title>Sequence and embryonic expression of deltaC in the zebrafish.</title>
        <authorList>
            <person name="Smithers L.E."/>
            <person name="Haddon C."/>
            <person name="Jiang Y.-J."/>
            <person name="Lewis J."/>
        </authorList>
    </citation>
    <scope>NUCLEOTIDE SEQUENCE [MRNA]</scope>
    <scope>TISSUE SPECIFICITY</scope>
</reference>
<reference key="2">
    <citation type="journal article" date="2000" name="Nature">
        <title>Notch signalling and the synchronization of the somite segmentation clock.</title>
        <authorList>
            <person name="Jiang Y.-J."/>
            <person name="Aerne B.L."/>
            <person name="Smithers L."/>
            <person name="Haddon C."/>
            <person name="Ish-Horowicz D."/>
            <person name="Lewis J."/>
        </authorList>
    </citation>
    <scope>FUNCTION</scope>
</reference>
<organism>
    <name type="scientific">Danio rerio</name>
    <name type="common">Zebrafish</name>
    <name type="synonym">Brachydanio rerio</name>
    <dbReference type="NCBI Taxonomy" id="7955"/>
    <lineage>
        <taxon>Eukaryota</taxon>
        <taxon>Metazoa</taxon>
        <taxon>Chordata</taxon>
        <taxon>Craniata</taxon>
        <taxon>Vertebrata</taxon>
        <taxon>Euteleostomi</taxon>
        <taxon>Actinopterygii</taxon>
        <taxon>Neopterygii</taxon>
        <taxon>Teleostei</taxon>
        <taxon>Ostariophysi</taxon>
        <taxon>Cypriniformes</taxon>
        <taxon>Danionidae</taxon>
        <taxon>Danioninae</taxon>
        <taxon>Danio</taxon>
    </lineage>
</organism>
<sequence>MARVLLTCFFILISSHLGKSSGVFELKVLSFTSTSSVCKGSSDCQIFFRVCLKHSQALILPEPPCTYGTGMSEILSADSISSSAYISVPFNFKWPGIVSLIIETWNAETSDQSTENNNNMISRLATKRRLAISEDWSQDVHLGRQSQLRFSYRVVCDEFYHGEECSDFCRPRNDTFGHFNCDAAGNRICLPGWKGDYCTEPICLSGCSEENGYCEAPGECKCRIGWEGPLCDECTRHPGCLHGTCNQPFQCTCKEGWGGLFCNEDLNFCTNHKPCRNDATCTNTGQGSYTCICKPGFSGKNCEIETNECDSNPCKNGGSCNDQENDYTCTCPQGFYGKNCEVSAMTCADGPCFNGGTCMEKGSGSYSCRCPPGYMGSNCEKKIDRCSSDPCANGGQCLDLGNKATCRCRPGFTGSRCETNIDDCSSNPCQNAGTCVDGINGYTCTCTLGFSGKDCRVRSDACSFMPCQNGGTCYTHFSGPVCQCPAGFMGTQCEYKQKPTPVNSPALPAALIVSFTLGLITLTLVICAAIVVLRQMRQNHKASSTTVRNNLDSVNNRISLSPTSPLGREKEAFLIPGGPFKVSNKDMALRSTSVDTHSSDKSNYKQKMVDYNLSIDEKHTNNKLEKNSESTLLVPPLNYPKEGVYHPVYIIPEHIEQRVFATEV</sequence>
<protein>
    <recommendedName>
        <fullName>Delta-like protein C</fullName>
        <shortName>DeltaC</shortName>
        <shortName>delC</shortName>
    </recommendedName>
</protein>
<feature type="signal peptide" evidence="2">
    <location>
        <begin position="1"/>
        <end position="20"/>
    </location>
</feature>
<feature type="chain" id="PRO_0000007516" description="Delta-like protein C">
    <location>
        <begin position="21"/>
        <end position="664"/>
    </location>
</feature>
<feature type="topological domain" description="Extracellular" evidence="2">
    <location>
        <begin position="21"/>
        <end position="511"/>
    </location>
</feature>
<feature type="transmembrane region" description="Helical" evidence="2">
    <location>
        <begin position="512"/>
        <end position="532"/>
    </location>
</feature>
<feature type="topological domain" description="Cytoplasmic" evidence="2">
    <location>
        <begin position="533"/>
        <end position="664"/>
    </location>
</feature>
<feature type="domain" description="DSL" evidence="4">
    <location>
        <begin position="154"/>
        <end position="198"/>
    </location>
</feature>
<feature type="domain" description="EGF-like 1" evidence="3">
    <location>
        <begin position="199"/>
        <end position="232"/>
    </location>
</feature>
<feature type="domain" description="EGF-like 2" evidence="3">
    <location>
        <begin position="233"/>
        <end position="263"/>
    </location>
</feature>
<feature type="domain" description="EGF-like 3" evidence="3">
    <location>
        <begin position="265"/>
        <end position="303"/>
    </location>
</feature>
<feature type="domain" description="EGF-like 4; calcium-binding" evidence="3">
    <location>
        <begin position="305"/>
        <end position="341"/>
    </location>
</feature>
<feature type="domain" description="EGF-like 5" evidence="3">
    <location>
        <begin position="343"/>
        <end position="380"/>
    </location>
</feature>
<feature type="domain" description="EGF-like 6" evidence="3">
    <location>
        <begin position="382"/>
        <end position="418"/>
    </location>
</feature>
<feature type="domain" description="EGF-like 7; calcium-binding" evidence="3">
    <location>
        <begin position="420"/>
        <end position="456"/>
    </location>
</feature>
<feature type="domain" description="EGF-like 8" evidence="3">
    <location>
        <begin position="458"/>
        <end position="494"/>
    </location>
</feature>
<feature type="glycosylation site" description="N-linked (GlcNAc...) asparagine" evidence="2">
    <location>
        <position position="173"/>
    </location>
</feature>
<feature type="disulfide bond" evidence="1">
    <location>
        <begin position="156"/>
        <end position="165"/>
    </location>
</feature>
<feature type="disulfide bond" evidence="1">
    <location>
        <begin position="169"/>
        <end position="181"/>
    </location>
</feature>
<feature type="disulfide bond" evidence="1">
    <location>
        <begin position="189"/>
        <end position="198"/>
    </location>
</feature>
<feature type="disulfide bond" evidence="1">
    <location>
        <begin position="203"/>
        <end position="214"/>
    </location>
</feature>
<feature type="disulfide bond" evidence="1">
    <location>
        <begin position="207"/>
        <end position="220"/>
    </location>
</feature>
<feature type="disulfide bond" evidence="1">
    <location>
        <begin position="222"/>
        <end position="231"/>
    </location>
</feature>
<feature type="disulfide bond" evidence="1">
    <location>
        <begin position="234"/>
        <end position="245"/>
    </location>
</feature>
<feature type="disulfide bond" evidence="1">
    <location>
        <begin position="240"/>
        <end position="251"/>
    </location>
</feature>
<feature type="disulfide bond" evidence="1">
    <location>
        <begin position="253"/>
        <end position="262"/>
    </location>
</feature>
<feature type="disulfide bond" evidence="1">
    <location>
        <begin position="269"/>
        <end position="281"/>
    </location>
</feature>
<feature type="disulfide bond" evidence="1">
    <location>
        <begin position="275"/>
        <end position="291"/>
    </location>
</feature>
<feature type="disulfide bond" evidence="1">
    <location>
        <begin position="293"/>
        <end position="302"/>
    </location>
</feature>
<feature type="disulfide bond" evidence="1">
    <location>
        <begin position="309"/>
        <end position="320"/>
    </location>
</feature>
<feature type="disulfide bond" evidence="1">
    <location>
        <begin position="314"/>
        <end position="329"/>
    </location>
</feature>
<feature type="disulfide bond" evidence="1">
    <location>
        <begin position="331"/>
        <end position="340"/>
    </location>
</feature>
<feature type="disulfide bond" evidence="1">
    <location>
        <begin position="347"/>
        <end position="358"/>
    </location>
</feature>
<feature type="disulfide bond" evidence="1">
    <location>
        <begin position="352"/>
        <end position="368"/>
    </location>
</feature>
<feature type="disulfide bond" evidence="1">
    <location>
        <begin position="370"/>
        <end position="379"/>
    </location>
</feature>
<feature type="disulfide bond" evidence="1">
    <location>
        <begin position="386"/>
        <end position="397"/>
    </location>
</feature>
<feature type="disulfide bond" evidence="1">
    <location>
        <begin position="391"/>
        <end position="406"/>
    </location>
</feature>
<feature type="disulfide bond" evidence="1">
    <location>
        <begin position="408"/>
        <end position="417"/>
    </location>
</feature>
<feature type="disulfide bond" evidence="1">
    <location>
        <begin position="424"/>
        <end position="435"/>
    </location>
</feature>
<feature type="disulfide bond" evidence="1">
    <location>
        <begin position="429"/>
        <end position="444"/>
    </location>
</feature>
<feature type="disulfide bond" evidence="1">
    <location>
        <begin position="446"/>
        <end position="455"/>
    </location>
</feature>
<feature type="disulfide bond" evidence="1">
    <location>
        <begin position="462"/>
        <end position="473"/>
    </location>
</feature>
<feature type="disulfide bond" evidence="1">
    <location>
        <begin position="467"/>
        <end position="482"/>
    </location>
</feature>
<feature type="disulfide bond" evidence="1">
    <location>
        <begin position="484"/>
        <end position="493"/>
    </location>
</feature>
<comment type="function">
    <text evidence="6">Acts as a ligand for Notch receptors and is involved in somitogenesis. Can activate Notch receptors. Required in somite segmentation to keep the oscillations of neighboring presomitic mesoderm cells synchronized.</text>
</comment>
<comment type="subcellular location">
    <subcellularLocation>
        <location evidence="1">Membrane</location>
        <topology evidence="1">Single-pass type I membrane protein</topology>
    </subcellularLocation>
</comment>
<comment type="tissue specificity">
    <text evidence="5">Strongly expressed in the early retina, where it precedes other delta proteins. Also expressed in cranial ganglia, in sensory epithelia including ear and lateral line and in scattered epidermal cells. In the mesoderm, expression is visible by 50% epiboly; it is expressed subsequently in the tail bud, in stripes in the presomitic mesoderm and in the posterior half of each somite. Also expressed in notochord, blood vessels and pronephros. In contrast to other delta proteins, it is not expressed in the majority of nascent primary neurons. In somites, it marks the posterior part of each formed somite, while deltaD (dld) marks the anterior part.</text>
</comment>
<comment type="PTM">
    <text evidence="1">Ubiquitinated by mib, leading to its endocytosis and subsequent degradation.</text>
</comment>
<dbReference type="EMBL" id="AF146429">
    <property type="protein sequence ID" value="AAF27299.1"/>
    <property type="molecule type" value="mRNA"/>
</dbReference>
<dbReference type="RefSeq" id="NP_571019.1">
    <property type="nucleotide sequence ID" value="NM_130944.1"/>
</dbReference>
<dbReference type="SMR" id="Q9IAT6"/>
<dbReference type="BioGRID" id="78356">
    <property type="interactions" value="3"/>
</dbReference>
<dbReference type="FunCoup" id="Q9IAT6">
    <property type="interactions" value="130"/>
</dbReference>
<dbReference type="STRING" id="7955.ENSDARP00000018643"/>
<dbReference type="GlyCosmos" id="Q9IAT6">
    <property type="glycosylation" value="1 site, No reported glycans"/>
</dbReference>
<dbReference type="PaxDb" id="7955-ENSDARP00000018643"/>
<dbReference type="GeneID" id="30120"/>
<dbReference type="KEGG" id="dre:30120"/>
<dbReference type="AGR" id="ZFIN:ZDB-GENE-000125-4"/>
<dbReference type="CTD" id="30120"/>
<dbReference type="ZFIN" id="ZDB-GENE-000125-4">
    <property type="gene designation" value="dlc"/>
</dbReference>
<dbReference type="eggNOG" id="KOG1217">
    <property type="taxonomic scope" value="Eukaryota"/>
</dbReference>
<dbReference type="InParanoid" id="Q9IAT6"/>
<dbReference type="OrthoDB" id="283575at2759"/>
<dbReference type="PhylomeDB" id="Q9IAT6"/>
<dbReference type="SignaLink" id="Q9IAT6"/>
<dbReference type="PRO" id="PR:Q9IAT6"/>
<dbReference type="Proteomes" id="UP000000437">
    <property type="component" value="Alternate scaffold 15"/>
</dbReference>
<dbReference type="Proteomes" id="UP000000437">
    <property type="component" value="Chromosome 15"/>
</dbReference>
<dbReference type="GO" id="GO:0005737">
    <property type="term" value="C:cytoplasm"/>
    <property type="evidence" value="ECO:0000314"/>
    <property type="project" value="ZFIN"/>
</dbReference>
<dbReference type="GO" id="GO:0048471">
    <property type="term" value="C:perinuclear region of cytoplasm"/>
    <property type="evidence" value="ECO:0000316"/>
    <property type="project" value="ZFIN"/>
</dbReference>
<dbReference type="GO" id="GO:0005886">
    <property type="term" value="C:plasma membrane"/>
    <property type="evidence" value="ECO:0000314"/>
    <property type="project" value="ZFIN"/>
</dbReference>
<dbReference type="GO" id="GO:0005509">
    <property type="term" value="F:calcium ion binding"/>
    <property type="evidence" value="ECO:0007669"/>
    <property type="project" value="InterPro"/>
</dbReference>
<dbReference type="GO" id="GO:0042802">
    <property type="term" value="F:identical protein binding"/>
    <property type="evidence" value="ECO:0000314"/>
    <property type="project" value="ZFIN"/>
</dbReference>
<dbReference type="GO" id="GO:0005112">
    <property type="term" value="F:Notch binding"/>
    <property type="evidence" value="ECO:0000318"/>
    <property type="project" value="GO_Central"/>
</dbReference>
<dbReference type="GO" id="GO:0030165">
    <property type="term" value="F:PDZ domain binding"/>
    <property type="evidence" value="ECO:0000314"/>
    <property type="project" value="ZFIN"/>
</dbReference>
<dbReference type="GO" id="GO:0060842">
    <property type="term" value="P:arterial endothelial cell differentiation"/>
    <property type="evidence" value="ECO:0000315"/>
    <property type="project" value="ZFIN"/>
</dbReference>
<dbReference type="GO" id="GO:0048514">
    <property type="term" value="P:blood vessel morphogenesis"/>
    <property type="evidence" value="ECO:0000315"/>
    <property type="project" value="ZFIN"/>
</dbReference>
<dbReference type="GO" id="GO:0035907">
    <property type="term" value="P:dorsal aorta development"/>
    <property type="evidence" value="ECO:0000316"/>
    <property type="project" value="ZFIN"/>
</dbReference>
<dbReference type="GO" id="GO:0002244">
    <property type="term" value="P:hematopoietic progenitor cell differentiation"/>
    <property type="evidence" value="ECO:0000316"/>
    <property type="project" value="ZFIN"/>
</dbReference>
<dbReference type="GO" id="GO:0060218">
    <property type="term" value="P:hematopoietic stem cell differentiation"/>
    <property type="evidence" value="ECO:0000315"/>
    <property type="project" value="ZFIN"/>
</dbReference>
<dbReference type="GO" id="GO:0045746">
    <property type="term" value="P:negative regulation of Notch signaling pathway"/>
    <property type="evidence" value="ECO:0000318"/>
    <property type="project" value="GO_Central"/>
</dbReference>
<dbReference type="GO" id="GO:0048666">
    <property type="term" value="P:neuron development"/>
    <property type="evidence" value="ECO:0000315"/>
    <property type="project" value="ZFIN"/>
</dbReference>
<dbReference type="GO" id="GO:0007219">
    <property type="term" value="P:Notch signaling pathway"/>
    <property type="evidence" value="ECO:0000315"/>
    <property type="project" value="ZFIN"/>
</dbReference>
<dbReference type="GO" id="GO:0061056">
    <property type="term" value="P:sclerotome development"/>
    <property type="evidence" value="ECO:0000316"/>
    <property type="project" value="ZFIN"/>
</dbReference>
<dbReference type="GO" id="GO:0001757">
    <property type="term" value="P:somite specification"/>
    <property type="evidence" value="ECO:0000316"/>
    <property type="project" value="ZFIN"/>
</dbReference>
<dbReference type="GO" id="GO:0001756">
    <property type="term" value="P:somitogenesis"/>
    <property type="evidence" value="ECO:0000315"/>
    <property type="project" value="ZFIN"/>
</dbReference>
<dbReference type="GO" id="GO:0021514">
    <property type="term" value="P:ventral spinal cord interneuron differentiation"/>
    <property type="evidence" value="ECO:0000316"/>
    <property type="project" value="ZFIN"/>
</dbReference>
<dbReference type="CDD" id="cd00054">
    <property type="entry name" value="EGF_CA"/>
    <property type="match status" value="6"/>
</dbReference>
<dbReference type="FunFam" id="2.10.25.10:FF:000018">
    <property type="entry name" value="Delta-like 1"/>
    <property type="match status" value="1"/>
</dbReference>
<dbReference type="FunFam" id="2.10.25.10:FF:000368">
    <property type="entry name" value="Delta-like 3 (Drosophila), isoform CRA_b"/>
    <property type="match status" value="1"/>
</dbReference>
<dbReference type="FunFam" id="2.10.25.10:FF:000012">
    <property type="entry name" value="Delta-like protein"/>
    <property type="match status" value="2"/>
</dbReference>
<dbReference type="FunFam" id="2.10.25.10:FF:000064">
    <property type="entry name" value="Delta-like protein"/>
    <property type="match status" value="1"/>
</dbReference>
<dbReference type="FunFam" id="2.10.25.10:FF:000435">
    <property type="entry name" value="Delta-like protein"/>
    <property type="match status" value="1"/>
</dbReference>
<dbReference type="FunFam" id="2.10.25.140:FF:000001">
    <property type="entry name" value="Delta-like protein"/>
    <property type="match status" value="1"/>
</dbReference>
<dbReference type="FunFam" id="2.60.40.3510:FF:000004">
    <property type="entry name" value="Delta-like protein"/>
    <property type="match status" value="1"/>
</dbReference>
<dbReference type="FunFam" id="2.10.25.10:FF:000122">
    <property type="entry name" value="Protein crumbs homolog 2"/>
    <property type="match status" value="1"/>
</dbReference>
<dbReference type="Gene3D" id="2.10.25.140">
    <property type="match status" value="1"/>
</dbReference>
<dbReference type="Gene3D" id="2.60.40.3510">
    <property type="match status" value="1"/>
</dbReference>
<dbReference type="Gene3D" id="2.10.25.10">
    <property type="entry name" value="Laminin"/>
    <property type="match status" value="7"/>
</dbReference>
<dbReference type="InterPro" id="IPR001774">
    <property type="entry name" value="DSL"/>
</dbReference>
<dbReference type="InterPro" id="IPR001881">
    <property type="entry name" value="EGF-like_Ca-bd_dom"/>
</dbReference>
<dbReference type="InterPro" id="IPR013032">
    <property type="entry name" value="EGF-like_CS"/>
</dbReference>
<dbReference type="InterPro" id="IPR000742">
    <property type="entry name" value="EGF-like_dom"/>
</dbReference>
<dbReference type="InterPro" id="IPR000152">
    <property type="entry name" value="EGF-type_Asp/Asn_hydroxyl_site"/>
</dbReference>
<dbReference type="InterPro" id="IPR018097">
    <property type="entry name" value="EGF_Ca-bd_CS"/>
</dbReference>
<dbReference type="InterPro" id="IPR009030">
    <property type="entry name" value="Growth_fac_rcpt_cys_sf"/>
</dbReference>
<dbReference type="InterPro" id="IPR011651">
    <property type="entry name" value="Notch_ligand_N"/>
</dbReference>
<dbReference type="PANTHER" id="PTHR12916">
    <property type="entry name" value="CYTOCHROME C OXIDASE POLYPEPTIDE VIC-2"/>
    <property type="match status" value="1"/>
</dbReference>
<dbReference type="PANTHER" id="PTHR12916:SF4">
    <property type="entry name" value="UNINFLATABLE, ISOFORM C"/>
    <property type="match status" value="1"/>
</dbReference>
<dbReference type="Pfam" id="PF01414">
    <property type="entry name" value="DSL"/>
    <property type="match status" value="1"/>
</dbReference>
<dbReference type="Pfam" id="PF00008">
    <property type="entry name" value="EGF"/>
    <property type="match status" value="5"/>
</dbReference>
<dbReference type="Pfam" id="PF21700">
    <property type="entry name" value="EGF_DL_JAG"/>
    <property type="match status" value="1"/>
</dbReference>
<dbReference type="Pfam" id="PF12661">
    <property type="entry name" value="hEGF"/>
    <property type="match status" value="1"/>
</dbReference>
<dbReference type="Pfam" id="PF07657">
    <property type="entry name" value="MNNL"/>
    <property type="match status" value="1"/>
</dbReference>
<dbReference type="PRINTS" id="PR00010">
    <property type="entry name" value="EGFBLOOD"/>
</dbReference>
<dbReference type="SMART" id="SM00051">
    <property type="entry name" value="DSL"/>
    <property type="match status" value="1"/>
</dbReference>
<dbReference type="SMART" id="SM00181">
    <property type="entry name" value="EGF"/>
    <property type="match status" value="8"/>
</dbReference>
<dbReference type="SMART" id="SM00179">
    <property type="entry name" value="EGF_CA"/>
    <property type="match status" value="6"/>
</dbReference>
<dbReference type="SUPFAM" id="SSF57196">
    <property type="entry name" value="EGF/Laminin"/>
    <property type="match status" value="3"/>
</dbReference>
<dbReference type="SUPFAM" id="SSF57184">
    <property type="entry name" value="Growth factor receptor domain"/>
    <property type="match status" value="1"/>
</dbReference>
<dbReference type="PROSITE" id="PS00010">
    <property type="entry name" value="ASX_HYDROXYL"/>
    <property type="match status" value="2"/>
</dbReference>
<dbReference type="PROSITE" id="PS51051">
    <property type="entry name" value="DSL"/>
    <property type="match status" value="1"/>
</dbReference>
<dbReference type="PROSITE" id="PS00022">
    <property type="entry name" value="EGF_1"/>
    <property type="match status" value="8"/>
</dbReference>
<dbReference type="PROSITE" id="PS01186">
    <property type="entry name" value="EGF_2"/>
    <property type="match status" value="8"/>
</dbReference>
<dbReference type="PROSITE" id="PS50026">
    <property type="entry name" value="EGF_3"/>
    <property type="match status" value="7"/>
</dbReference>
<dbReference type="PROSITE" id="PS01187">
    <property type="entry name" value="EGF_CA"/>
    <property type="match status" value="2"/>
</dbReference>
<name>DLLC_DANRE</name>
<accession>Q9IAT6</accession>
<keyword id="KW-0106">Calcium</keyword>
<keyword id="KW-0217">Developmental protein</keyword>
<keyword id="KW-0221">Differentiation</keyword>
<keyword id="KW-1015">Disulfide bond</keyword>
<keyword id="KW-0245">EGF-like domain</keyword>
<keyword id="KW-0325">Glycoprotein</keyword>
<keyword id="KW-0472">Membrane</keyword>
<keyword id="KW-0914">Notch signaling pathway</keyword>
<keyword id="KW-1185">Reference proteome</keyword>
<keyword id="KW-0677">Repeat</keyword>
<keyword id="KW-0732">Signal</keyword>
<keyword id="KW-0812">Transmembrane</keyword>
<keyword id="KW-1133">Transmembrane helix</keyword>
<keyword id="KW-0832">Ubl conjugation</keyword>